<organism>
    <name type="scientific">Pseudomonas aeruginosa (strain UCBPP-PA14)</name>
    <dbReference type="NCBI Taxonomy" id="208963"/>
    <lineage>
        <taxon>Bacteria</taxon>
        <taxon>Pseudomonadati</taxon>
        <taxon>Pseudomonadota</taxon>
        <taxon>Gammaproteobacteria</taxon>
        <taxon>Pseudomonadales</taxon>
        <taxon>Pseudomonadaceae</taxon>
        <taxon>Pseudomonas</taxon>
    </lineage>
</organism>
<dbReference type="EC" id="1.1.1.42" evidence="1"/>
<dbReference type="EMBL" id="CP000438">
    <property type="protein sequence ID" value="ABJ11846.1"/>
    <property type="molecule type" value="Genomic_DNA"/>
</dbReference>
<dbReference type="RefSeq" id="WP_003090436.1">
    <property type="nucleotide sequence ID" value="NZ_CP034244.1"/>
</dbReference>
<dbReference type="PDB" id="5M2E">
    <property type="method" value="X-ray"/>
    <property type="resolution" value="2.70 A"/>
    <property type="chains" value="A/B/C/D=1-418"/>
</dbReference>
<dbReference type="PDBsum" id="5M2E"/>
<dbReference type="SMR" id="Q02NB5"/>
<dbReference type="iPTMnet" id="Q02NB5"/>
<dbReference type="KEGG" id="pau:PA14_30190"/>
<dbReference type="PseudoCAP" id="PA14_30190"/>
<dbReference type="HOGENOM" id="CLU_031953_7_1_6"/>
<dbReference type="BioCyc" id="PAER208963:G1G74-2528-MONOMER"/>
<dbReference type="Proteomes" id="UP000000653">
    <property type="component" value="Chromosome"/>
</dbReference>
<dbReference type="GO" id="GO:0005576">
    <property type="term" value="C:extracellular region"/>
    <property type="evidence" value="ECO:0007669"/>
    <property type="project" value="UniProtKB-SubCell"/>
</dbReference>
<dbReference type="GO" id="GO:0004450">
    <property type="term" value="F:isocitrate dehydrogenase (NADP+) activity"/>
    <property type="evidence" value="ECO:0007669"/>
    <property type="project" value="UniProtKB-EC"/>
</dbReference>
<dbReference type="GO" id="GO:0000287">
    <property type="term" value="F:magnesium ion binding"/>
    <property type="evidence" value="ECO:0007669"/>
    <property type="project" value="InterPro"/>
</dbReference>
<dbReference type="GO" id="GO:0051287">
    <property type="term" value="F:NAD binding"/>
    <property type="evidence" value="ECO:0007669"/>
    <property type="project" value="InterPro"/>
</dbReference>
<dbReference type="GO" id="GO:0006097">
    <property type="term" value="P:glyoxylate cycle"/>
    <property type="evidence" value="ECO:0007669"/>
    <property type="project" value="UniProtKB-KW"/>
</dbReference>
<dbReference type="GO" id="GO:0006099">
    <property type="term" value="P:tricarboxylic acid cycle"/>
    <property type="evidence" value="ECO:0007669"/>
    <property type="project" value="UniProtKB-KW"/>
</dbReference>
<dbReference type="FunFam" id="3.40.718.10:FF:000005">
    <property type="entry name" value="Isocitrate dehydrogenase [NADP]"/>
    <property type="match status" value="1"/>
</dbReference>
<dbReference type="Gene3D" id="3.40.718.10">
    <property type="entry name" value="Isopropylmalate Dehydrogenase"/>
    <property type="match status" value="1"/>
</dbReference>
<dbReference type="InterPro" id="IPR019818">
    <property type="entry name" value="IsoCit/isopropylmalate_DH_CS"/>
</dbReference>
<dbReference type="InterPro" id="IPR004439">
    <property type="entry name" value="Isocitrate_DH_NADP_dimer_prok"/>
</dbReference>
<dbReference type="InterPro" id="IPR024084">
    <property type="entry name" value="IsoPropMal-DH-like_dom"/>
</dbReference>
<dbReference type="NCBIfam" id="NF005425">
    <property type="entry name" value="PRK07006.1"/>
    <property type="match status" value="1"/>
</dbReference>
<dbReference type="NCBIfam" id="TIGR00183">
    <property type="entry name" value="prok_nadp_idh"/>
    <property type="match status" value="1"/>
</dbReference>
<dbReference type="PANTHER" id="PTHR43504">
    <property type="entry name" value="ISOCITRATE DEHYDROGENASE [NADP]"/>
    <property type="match status" value="1"/>
</dbReference>
<dbReference type="PANTHER" id="PTHR43504:SF1">
    <property type="entry name" value="ISOCITRATE DEHYDROGENASE [NADP]"/>
    <property type="match status" value="1"/>
</dbReference>
<dbReference type="Pfam" id="PF00180">
    <property type="entry name" value="Iso_dh"/>
    <property type="match status" value="1"/>
</dbReference>
<dbReference type="SMART" id="SM01329">
    <property type="entry name" value="Iso_dh"/>
    <property type="match status" value="1"/>
</dbReference>
<dbReference type="SUPFAM" id="SSF53659">
    <property type="entry name" value="Isocitrate/Isopropylmalate dehydrogenase-like"/>
    <property type="match status" value="1"/>
</dbReference>
<dbReference type="PROSITE" id="PS00470">
    <property type="entry name" value="IDH_IMDH"/>
    <property type="match status" value="1"/>
</dbReference>
<keyword id="KW-0002">3D-structure</keyword>
<keyword id="KW-0329">Glyoxylate bypass</keyword>
<keyword id="KW-0460">Magnesium</keyword>
<keyword id="KW-0464">Manganese</keyword>
<keyword id="KW-0479">Metal-binding</keyword>
<keyword id="KW-0521">NADP</keyword>
<keyword id="KW-0560">Oxidoreductase</keyword>
<keyword id="KW-0597">Phosphoprotein</keyword>
<keyword id="KW-0964">Secreted</keyword>
<keyword id="KW-0816">Tricarboxylic acid cycle</keyword>
<gene>
    <name type="primary">icd</name>
    <name type="ordered locus">PA14_30190</name>
</gene>
<sequence>MGYQKIQVPATGDKITVNADMSLSVPKNPIIPFIEGDGIGVDISPVMIKVVDAAVEKAYKGERKIAWMEVYAGEKATQVYDQDTWLPQETLDAVRDYVVSIKGPLTTPVGGGIRSLNVALRQQLDLYVCQRPVRWFEGVPSPVKKPGDVDMVIFRENSEDIYAGVEWKAGSPEAEKVIKFLTEEMGVKKIRFTENCGIGIKPVSQEGTKRLVRKALQYAVDNDRSSVTLVHKGNIMKFTEGAFKDWGYEVARDEFGAELLDGGPWMQFKNPKTGKNVVVKDVIADAMLQQILLRPAEYDVIATLNLNGDYLSDALAAEVGGIGIAPGANLSDSVAMFEATHGTAPKYAGQDKVNPGSLILSAEMMLRHMGWTEAADLIIKGTNGAIAAKTVTYDFERLMDGATLLSCSEFGDAMIAKM</sequence>
<comment type="function">
    <text evidence="1">Catalyzes the oxidative decarboxylation of isocitrate to 2-oxoglutarate and carbon dioxide with the concomitant reduction of NADP(+).</text>
</comment>
<comment type="catalytic activity">
    <reaction evidence="1">
        <text>D-threo-isocitrate + NADP(+) = 2-oxoglutarate + CO2 + NADPH</text>
        <dbReference type="Rhea" id="RHEA:19629"/>
        <dbReference type="ChEBI" id="CHEBI:15562"/>
        <dbReference type="ChEBI" id="CHEBI:16526"/>
        <dbReference type="ChEBI" id="CHEBI:16810"/>
        <dbReference type="ChEBI" id="CHEBI:57783"/>
        <dbReference type="ChEBI" id="CHEBI:58349"/>
        <dbReference type="EC" id="1.1.1.42"/>
    </reaction>
</comment>
<comment type="cofactor">
    <cofactor evidence="1">
        <name>Mg(2+)</name>
        <dbReference type="ChEBI" id="CHEBI:18420"/>
    </cofactor>
    <cofactor evidence="1">
        <name>Mn(2+)</name>
        <dbReference type="ChEBI" id="CHEBI:29035"/>
    </cofactor>
    <text evidence="1">Binds 1 Mg(2+) or Mn(2+) ion per subunit.</text>
</comment>
<comment type="subunit">
    <text evidence="1">Homodimer.</text>
</comment>
<comment type="subcellular location">
    <subcellularLocation>
        <location evidence="2">Secreted</location>
    </subcellularLocation>
    <text evidence="4">Could be present extracellularly due to cell lysis.</text>
</comment>
<comment type="similarity">
    <text evidence="4">Belongs to the isocitrate and isopropylmalate dehydrogenases family.</text>
</comment>
<name>IDH_PSEAB</name>
<evidence type="ECO:0000250" key="1">
    <source>
        <dbReference type="UniProtKB" id="P08200"/>
    </source>
</evidence>
<evidence type="ECO:0000269" key="2">
    <source>
    </source>
</evidence>
<evidence type="ECO:0000269" key="3">
    <source>
    </source>
</evidence>
<evidence type="ECO:0000305" key="4"/>
<evidence type="ECO:0007829" key="5">
    <source>
        <dbReference type="PDB" id="5M2E"/>
    </source>
</evidence>
<feature type="chain" id="PRO_0000431337" description="Isocitrate dehydrogenase [NADP]">
    <location>
        <begin position="1"/>
        <end position="418"/>
    </location>
</feature>
<feature type="binding site" evidence="1">
    <location>
        <position position="106"/>
    </location>
    <ligand>
        <name>NADP(+)</name>
        <dbReference type="ChEBI" id="CHEBI:58349"/>
    </ligand>
</feature>
<feature type="binding site" evidence="1">
    <location>
        <position position="115"/>
    </location>
    <ligand>
        <name>D-threo-isocitrate</name>
        <dbReference type="ChEBI" id="CHEBI:15562"/>
    </ligand>
</feature>
<feature type="binding site" evidence="1">
    <location>
        <position position="117"/>
    </location>
    <ligand>
        <name>D-threo-isocitrate</name>
        <dbReference type="ChEBI" id="CHEBI:15562"/>
    </ligand>
</feature>
<feature type="binding site" evidence="1">
    <location>
        <position position="121"/>
    </location>
    <ligand>
        <name>D-threo-isocitrate</name>
        <dbReference type="ChEBI" id="CHEBI:15562"/>
    </ligand>
</feature>
<feature type="binding site" evidence="1">
    <location>
        <position position="131"/>
    </location>
    <ligand>
        <name>D-threo-isocitrate</name>
        <dbReference type="ChEBI" id="CHEBI:15562"/>
    </ligand>
</feature>
<feature type="binding site" evidence="1">
    <location>
        <position position="155"/>
    </location>
    <ligand>
        <name>D-threo-isocitrate</name>
        <dbReference type="ChEBI" id="CHEBI:15562"/>
    </ligand>
</feature>
<feature type="binding site" evidence="1">
    <location>
        <position position="309"/>
    </location>
    <ligand>
        <name>Mg(2+)</name>
        <dbReference type="ChEBI" id="CHEBI:18420"/>
    </ligand>
</feature>
<feature type="binding site" evidence="1">
    <location>
        <begin position="341"/>
        <end position="347"/>
    </location>
    <ligand>
        <name>NADP(+)</name>
        <dbReference type="ChEBI" id="CHEBI:58349"/>
    </ligand>
</feature>
<feature type="binding site" evidence="1">
    <location>
        <position position="354"/>
    </location>
    <ligand>
        <name>NADP(+)</name>
        <dbReference type="ChEBI" id="CHEBI:58349"/>
    </ligand>
</feature>
<feature type="binding site" evidence="1">
    <location>
        <position position="393"/>
    </location>
    <ligand>
        <name>NADP(+)</name>
        <dbReference type="ChEBI" id="CHEBI:58349"/>
    </ligand>
</feature>
<feature type="binding site" evidence="1">
    <location>
        <position position="397"/>
    </location>
    <ligand>
        <name>NADP(+)</name>
        <dbReference type="ChEBI" id="CHEBI:58349"/>
    </ligand>
</feature>
<feature type="site" description="Critical for catalysis" evidence="1">
    <location>
        <position position="162"/>
    </location>
</feature>
<feature type="site" description="Critical for catalysis" evidence="1">
    <location>
        <position position="232"/>
    </location>
</feature>
<feature type="modified residue" description="Phosphoserine" evidence="2 3">
    <location>
        <position position="115"/>
    </location>
</feature>
<feature type="modified residue" description="Phosphothreonine" evidence="2">
    <location>
        <position position="193"/>
    </location>
</feature>
<feature type="helix" evidence="5">
    <location>
        <begin position="19"/>
        <end position="21"/>
    </location>
</feature>
<feature type="strand" evidence="5">
    <location>
        <begin position="27"/>
        <end position="34"/>
    </location>
</feature>
<feature type="helix" evidence="5">
    <location>
        <begin position="40"/>
        <end position="59"/>
    </location>
</feature>
<feature type="strand" evidence="5">
    <location>
        <begin position="66"/>
        <end position="69"/>
    </location>
</feature>
<feature type="helix" evidence="5">
    <location>
        <begin position="74"/>
        <end position="79"/>
    </location>
</feature>
<feature type="helix" evidence="5">
    <location>
        <begin position="88"/>
        <end position="96"/>
    </location>
</feature>
<feature type="strand" evidence="5">
    <location>
        <begin position="97"/>
        <end position="102"/>
    </location>
</feature>
<feature type="strand" evidence="5">
    <location>
        <begin position="109"/>
        <end position="112"/>
    </location>
</feature>
<feature type="helix" evidence="5">
    <location>
        <begin position="116"/>
        <end position="124"/>
    </location>
</feature>
<feature type="strand" evidence="5">
    <location>
        <begin position="128"/>
        <end position="134"/>
    </location>
</feature>
<feature type="strand" evidence="5">
    <location>
        <begin position="142"/>
        <end position="144"/>
    </location>
</feature>
<feature type="helix" evidence="5">
    <location>
        <begin position="146"/>
        <end position="148"/>
    </location>
</feature>
<feature type="strand" evidence="5">
    <location>
        <begin position="150"/>
        <end position="156"/>
    </location>
</feature>
<feature type="helix" evidence="5">
    <location>
        <begin position="160"/>
        <end position="163"/>
    </location>
</feature>
<feature type="helix" evidence="5">
    <location>
        <begin position="172"/>
        <end position="183"/>
    </location>
</feature>
<feature type="strand" evidence="5">
    <location>
        <begin position="194"/>
        <end position="204"/>
    </location>
</feature>
<feature type="helix" evidence="5">
    <location>
        <begin position="205"/>
        <end position="221"/>
    </location>
</feature>
<feature type="strand" evidence="5">
    <location>
        <begin position="225"/>
        <end position="231"/>
    </location>
</feature>
<feature type="turn" evidence="5">
    <location>
        <begin position="233"/>
        <end position="235"/>
    </location>
</feature>
<feature type="turn" evidence="5">
    <location>
        <begin position="237"/>
        <end position="239"/>
    </location>
</feature>
<feature type="helix" evidence="5">
    <location>
        <begin position="240"/>
        <end position="254"/>
    </location>
</feature>
<feature type="strand" evidence="5">
    <location>
        <begin position="258"/>
        <end position="264"/>
    </location>
</feature>
<feature type="strand" evidence="5">
    <location>
        <begin position="266"/>
        <end position="269"/>
    </location>
</feature>
<feature type="turn" evidence="5">
    <location>
        <begin position="271"/>
        <end position="273"/>
    </location>
</feature>
<feature type="strand" evidence="5">
    <location>
        <begin position="276"/>
        <end position="283"/>
    </location>
</feature>
<feature type="helix" evidence="5">
    <location>
        <begin position="284"/>
        <end position="293"/>
    </location>
</feature>
<feature type="helix" evidence="5">
    <location>
        <begin position="295"/>
        <end position="297"/>
    </location>
</feature>
<feature type="strand" evidence="5">
    <location>
        <begin position="300"/>
        <end position="303"/>
    </location>
</feature>
<feature type="helix" evidence="5">
    <location>
        <begin position="305"/>
        <end position="318"/>
    </location>
</feature>
<feature type="helix" evidence="5">
    <location>
        <begin position="322"/>
        <end position="324"/>
    </location>
</feature>
<feature type="strand" evidence="5">
    <location>
        <begin position="326"/>
        <end position="330"/>
    </location>
</feature>
<feature type="strand" evidence="5">
    <location>
        <begin position="335"/>
        <end position="339"/>
    </location>
</feature>
<feature type="helix" evidence="5">
    <location>
        <begin position="345"/>
        <end position="347"/>
    </location>
</feature>
<feature type="helix" evidence="5">
    <location>
        <begin position="356"/>
        <end position="368"/>
    </location>
</feature>
<feature type="helix" evidence="5">
    <location>
        <begin position="372"/>
        <end position="387"/>
    </location>
</feature>
<feature type="helix" evidence="5">
    <location>
        <begin position="393"/>
        <end position="396"/>
    </location>
</feature>
<feature type="helix" evidence="5">
    <location>
        <begin position="407"/>
        <end position="417"/>
    </location>
</feature>
<accession>Q02NB5</accession>
<proteinExistence type="evidence at protein level"/>
<protein>
    <recommendedName>
        <fullName>Isocitrate dehydrogenase [NADP]</fullName>
        <shortName>IDH</shortName>
        <ecNumber evidence="1">1.1.1.42</ecNumber>
    </recommendedName>
    <alternativeName>
        <fullName>IDP</fullName>
    </alternativeName>
    <alternativeName>
        <fullName>NADP(+)-specific ICDH</fullName>
    </alternativeName>
    <alternativeName>
        <fullName>Oxalosuccinate decarboxylase</fullName>
    </alternativeName>
</protein>
<reference key="1">
    <citation type="journal article" date="2006" name="Genome Biol.">
        <title>Genomic analysis reveals that Pseudomonas aeruginosa virulence is combinatorial.</title>
        <authorList>
            <person name="Lee D.G."/>
            <person name="Urbach J.M."/>
            <person name="Wu G."/>
            <person name="Liberati N.T."/>
            <person name="Feinbaum R.L."/>
            <person name="Miyata S."/>
            <person name="Diggins L.T."/>
            <person name="He J."/>
            <person name="Saucier M."/>
            <person name="Deziel E."/>
            <person name="Friedman L."/>
            <person name="Li L."/>
            <person name="Grills G."/>
            <person name="Montgomery K."/>
            <person name="Kucherlapati R."/>
            <person name="Rahme L.G."/>
            <person name="Ausubel F.M."/>
        </authorList>
    </citation>
    <scope>NUCLEOTIDE SEQUENCE [LARGE SCALE GENOMIC DNA]</scope>
    <source>
        <strain>UCBPP-PA14</strain>
    </source>
</reference>
<reference key="2">
    <citation type="journal article" date="2014" name="Anal. Bioanal. Chem.">
        <title>Potential of liquid-isoelectric-focusing protein fractionation to improve phosphoprotein characterization of Pseudomonas aeruginosa PA14.</title>
        <authorList>
            <person name="Ouidir T."/>
            <person name="Jarnier F."/>
            <person name="Cosette P."/>
            <person name="Jouenne T."/>
            <person name="Hardouin J."/>
        </authorList>
    </citation>
    <scope>IDENTIFICATION BY MASS SPECTROMETRY</scope>
    <scope>PHOSPHORYLATION AT SER-115</scope>
    <source>
        <strain>UCBPP-PA14</strain>
    </source>
</reference>
<reference key="3">
    <citation type="journal article" date="2014" name="Proteomics">
        <title>Extracellular Ser/Thr/Tyr phosphorylated proteins of Pseudomonas aeruginosa PA14 strain.</title>
        <authorList>
            <person name="Ouidir T."/>
            <person name="Jarnier F."/>
            <person name="Cosette P."/>
            <person name="Jouenne T."/>
            <person name="Hardouin J."/>
        </authorList>
    </citation>
    <scope>IDENTIFICATION BY MASS SPECTROMETRY</scope>
    <scope>SUBCELLULAR LOCATION</scope>
    <scope>PHOSPHORYLATION AT SER-115 AND THR-193</scope>
    <source>
        <strain>UCBPP-PA14</strain>
    </source>
</reference>